<evidence type="ECO:0000255" key="1">
    <source>
        <dbReference type="HAMAP-Rule" id="MF_00248"/>
    </source>
</evidence>
<reference key="1">
    <citation type="journal article" date="2010" name="PLoS ONE">
        <title>The complete multipartite genome sequence of Cupriavidus necator JMP134, a versatile pollutant degrader.</title>
        <authorList>
            <person name="Lykidis A."/>
            <person name="Perez-Pantoja D."/>
            <person name="Ledger T."/>
            <person name="Mavromatis K."/>
            <person name="Anderson I.J."/>
            <person name="Ivanova N.N."/>
            <person name="Hooper S.D."/>
            <person name="Lapidus A."/>
            <person name="Lucas S."/>
            <person name="Gonzalez B."/>
            <person name="Kyrpides N.C."/>
        </authorList>
    </citation>
    <scope>NUCLEOTIDE SEQUENCE [LARGE SCALE GENOMIC DNA]</scope>
    <source>
        <strain>JMP134 / LMG 1197</strain>
    </source>
</reference>
<feature type="chain" id="PRO_1000012654" description="ATP-dependent protease subunit HslV">
    <location>
        <begin position="1"/>
        <end position="178"/>
    </location>
</feature>
<feature type="active site" evidence="1">
    <location>
        <position position="7"/>
    </location>
</feature>
<feature type="binding site" evidence="1">
    <location>
        <position position="162"/>
    </location>
    <ligand>
        <name>Na(+)</name>
        <dbReference type="ChEBI" id="CHEBI:29101"/>
    </ligand>
</feature>
<feature type="binding site" evidence="1">
    <location>
        <position position="165"/>
    </location>
    <ligand>
        <name>Na(+)</name>
        <dbReference type="ChEBI" id="CHEBI:29101"/>
    </ligand>
</feature>
<feature type="binding site" evidence="1">
    <location>
        <position position="168"/>
    </location>
    <ligand>
        <name>Na(+)</name>
        <dbReference type="ChEBI" id="CHEBI:29101"/>
    </ligand>
</feature>
<keyword id="KW-0021">Allosteric enzyme</keyword>
<keyword id="KW-0963">Cytoplasm</keyword>
<keyword id="KW-0378">Hydrolase</keyword>
<keyword id="KW-0479">Metal-binding</keyword>
<keyword id="KW-0645">Protease</keyword>
<keyword id="KW-0915">Sodium</keyword>
<keyword id="KW-0888">Threonine protease</keyword>
<proteinExistence type="inferred from homology"/>
<comment type="function">
    <text evidence="1">Protease subunit of a proteasome-like degradation complex believed to be a general protein degrading machinery.</text>
</comment>
<comment type="catalytic activity">
    <reaction evidence="1">
        <text>ATP-dependent cleavage of peptide bonds with broad specificity.</text>
        <dbReference type="EC" id="3.4.25.2"/>
    </reaction>
</comment>
<comment type="activity regulation">
    <text evidence="1">Allosterically activated by HslU binding.</text>
</comment>
<comment type="subunit">
    <text evidence="1">A double ring-shaped homohexamer of HslV is capped on each side by a ring-shaped HslU homohexamer. The assembly of the HslU/HslV complex is dependent on binding of ATP.</text>
</comment>
<comment type="subcellular location">
    <subcellularLocation>
        <location evidence="1">Cytoplasm</location>
    </subcellularLocation>
</comment>
<comment type="similarity">
    <text evidence="1">Belongs to the peptidase T1B family. HslV subfamily.</text>
</comment>
<protein>
    <recommendedName>
        <fullName evidence="1">ATP-dependent protease subunit HslV</fullName>
        <ecNumber evidence="1">3.4.25.2</ecNumber>
    </recommendedName>
</protein>
<gene>
    <name evidence="1" type="primary">hslV</name>
    <name type="ordered locus">Reut_A0167</name>
</gene>
<dbReference type="EC" id="3.4.25.2" evidence="1"/>
<dbReference type="EMBL" id="CP000090">
    <property type="protein sequence ID" value="AAZ59549.1"/>
    <property type="molecule type" value="Genomic_DNA"/>
</dbReference>
<dbReference type="SMR" id="Q476Y4"/>
<dbReference type="STRING" id="264198.Reut_A0167"/>
<dbReference type="MEROPS" id="T01.006"/>
<dbReference type="KEGG" id="reu:Reut_A0167"/>
<dbReference type="eggNOG" id="COG5405">
    <property type="taxonomic scope" value="Bacteria"/>
</dbReference>
<dbReference type="HOGENOM" id="CLU_093872_1_0_4"/>
<dbReference type="OrthoDB" id="9804884at2"/>
<dbReference type="GO" id="GO:0009376">
    <property type="term" value="C:HslUV protease complex"/>
    <property type="evidence" value="ECO:0007669"/>
    <property type="project" value="UniProtKB-UniRule"/>
</dbReference>
<dbReference type="GO" id="GO:0005839">
    <property type="term" value="C:proteasome core complex"/>
    <property type="evidence" value="ECO:0007669"/>
    <property type="project" value="InterPro"/>
</dbReference>
<dbReference type="GO" id="GO:0046872">
    <property type="term" value="F:metal ion binding"/>
    <property type="evidence" value="ECO:0007669"/>
    <property type="project" value="UniProtKB-KW"/>
</dbReference>
<dbReference type="GO" id="GO:0004298">
    <property type="term" value="F:threonine-type endopeptidase activity"/>
    <property type="evidence" value="ECO:0007669"/>
    <property type="project" value="UniProtKB-KW"/>
</dbReference>
<dbReference type="GO" id="GO:0051603">
    <property type="term" value="P:proteolysis involved in protein catabolic process"/>
    <property type="evidence" value="ECO:0007669"/>
    <property type="project" value="InterPro"/>
</dbReference>
<dbReference type="CDD" id="cd01913">
    <property type="entry name" value="protease_HslV"/>
    <property type="match status" value="1"/>
</dbReference>
<dbReference type="FunFam" id="3.60.20.10:FF:000002">
    <property type="entry name" value="ATP-dependent protease subunit HslV"/>
    <property type="match status" value="1"/>
</dbReference>
<dbReference type="Gene3D" id="3.60.20.10">
    <property type="entry name" value="Glutamine Phosphoribosylpyrophosphate, subunit 1, domain 1"/>
    <property type="match status" value="1"/>
</dbReference>
<dbReference type="HAMAP" id="MF_00248">
    <property type="entry name" value="HslV"/>
    <property type="match status" value="1"/>
</dbReference>
<dbReference type="InterPro" id="IPR022281">
    <property type="entry name" value="ATP-dep_Prtase_HsIV_su"/>
</dbReference>
<dbReference type="InterPro" id="IPR029055">
    <property type="entry name" value="Ntn_hydrolases_N"/>
</dbReference>
<dbReference type="InterPro" id="IPR001353">
    <property type="entry name" value="Proteasome_sua/b"/>
</dbReference>
<dbReference type="InterPro" id="IPR023333">
    <property type="entry name" value="Proteasome_suB-type"/>
</dbReference>
<dbReference type="NCBIfam" id="TIGR03692">
    <property type="entry name" value="ATP_dep_HslV"/>
    <property type="match status" value="1"/>
</dbReference>
<dbReference type="NCBIfam" id="NF003964">
    <property type="entry name" value="PRK05456.1"/>
    <property type="match status" value="1"/>
</dbReference>
<dbReference type="PANTHER" id="PTHR32194:SF0">
    <property type="entry name" value="ATP-DEPENDENT PROTEASE SUBUNIT HSLV"/>
    <property type="match status" value="1"/>
</dbReference>
<dbReference type="PANTHER" id="PTHR32194">
    <property type="entry name" value="METALLOPROTEASE TLDD"/>
    <property type="match status" value="1"/>
</dbReference>
<dbReference type="Pfam" id="PF00227">
    <property type="entry name" value="Proteasome"/>
    <property type="match status" value="1"/>
</dbReference>
<dbReference type="PIRSF" id="PIRSF039093">
    <property type="entry name" value="HslV"/>
    <property type="match status" value="1"/>
</dbReference>
<dbReference type="SUPFAM" id="SSF56235">
    <property type="entry name" value="N-terminal nucleophile aminohydrolases (Ntn hydrolases)"/>
    <property type="match status" value="1"/>
</dbReference>
<dbReference type="PROSITE" id="PS51476">
    <property type="entry name" value="PROTEASOME_BETA_2"/>
    <property type="match status" value="1"/>
</dbReference>
<accession>Q476Y4</accession>
<name>HSLV_CUPPJ</name>
<sequence length="178" mass="19089">MEQYHGTTIVSVRRGNQVALGGDGQVTLGNIVMKGTARKVRRIYNGKVLVGFAGSTADAFSLLDRFEAKLEKYQGNLTRAAVDLAKDWRSDRALRRLEAMLITADRETTLVITGNGDVLDPEGGIAAIGSGGAYAQSAAKALVENTELAPRDVVEKALTIAGELCIYTNTNFVIETLE</sequence>
<organism>
    <name type="scientific">Cupriavidus pinatubonensis (strain JMP 134 / LMG 1197)</name>
    <name type="common">Cupriavidus necator (strain JMP 134)</name>
    <dbReference type="NCBI Taxonomy" id="264198"/>
    <lineage>
        <taxon>Bacteria</taxon>
        <taxon>Pseudomonadati</taxon>
        <taxon>Pseudomonadota</taxon>
        <taxon>Betaproteobacteria</taxon>
        <taxon>Burkholderiales</taxon>
        <taxon>Burkholderiaceae</taxon>
        <taxon>Cupriavidus</taxon>
    </lineage>
</organism>